<feature type="chain" id="PRO_0000092875" description="Phosphate import ATP-binding protein PstB 2">
    <location>
        <begin position="1"/>
        <end position="249"/>
    </location>
</feature>
<feature type="domain" description="ABC transporter" evidence="1">
    <location>
        <begin position="4"/>
        <end position="244"/>
    </location>
</feature>
<feature type="binding site" evidence="1">
    <location>
        <begin position="36"/>
        <end position="43"/>
    </location>
    <ligand>
        <name>ATP</name>
        <dbReference type="ChEBI" id="CHEBI:30616"/>
    </ligand>
</feature>
<dbReference type="EC" id="7.3.2.1" evidence="1"/>
<dbReference type="EMBL" id="AE014299">
    <property type="protein sequence ID" value="AAN57258.1"/>
    <property type="molecule type" value="Genomic_DNA"/>
</dbReference>
<dbReference type="RefSeq" id="NP_719814.1">
    <property type="nucleotide sequence ID" value="NC_004347.2"/>
</dbReference>
<dbReference type="RefSeq" id="WP_011073952.1">
    <property type="nucleotide sequence ID" value="NC_004347.2"/>
</dbReference>
<dbReference type="SMR" id="Q8E9I8"/>
<dbReference type="STRING" id="211586.SO_4289"/>
<dbReference type="PaxDb" id="211586-SO_4289"/>
<dbReference type="KEGG" id="son:SO_4289"/>
<dbReference type="PATRIC" id="fig|211586.12.peg.4152"/>
<dbReference type="eggNOG" id="COG1117">
    <property type="taxonomic scope" value="Bacteria"/>
</dbReference>
<dbReference type="HOGENOM" id="CLU_000604_1_22_6"/>
<dbReference type="OrthoDB" id="9802264at2"/>
<dbReference type="PhylomeDB" id="Q8E9I8"/>
<dbReference type="BioCyc" id="SONE211586:G1GMP-3962-MONOMER"/>
<dbReference type="Proteomes" id="UP000008186">
    <property type="component" value="Chromosome"/>
</dbReference>
<dbReference type="GO" id="GO:0005886">
    <property type="term" value="C:plasma membrane"/>
    <property type="evidence" value="ECO:0007669"/>
    <property type="project" value="UniProtKB-SubCell"/>
</dbReference>
<dbReference type="GO" id="GO:0005524">
    <property type="term" value="F:ATP binding"/>
    <property type="evidence" value="ECO:0007669"/>
    <property type="project" value="UniProtKB-KW"/>
</dbReference>
<dbReference type="GO" id="GO:0016887">
    <property type="term" value="F:ATP hydrolysis activity"/>
    <property type="evidence" value="ECO:0007669"/>
    <property type="project" value="InterPro"/>
</dbReference>
<dbReference type="GO" id="GO:0015415">
    <property type="term" value="F:ATPase-coupled phosphate ion transmembrane transporter activity"/>
    <property type="evidence" value="ECO:0007669"/>
    <property type="project" value="UniProtKB-EC"/>
</dbReference>
<dbReference type="GO" id="GO:0035435">
    <property type="term" value="P:phosphate ion transmembrane transport"/>
    <property type="evidence" value="ECO:0007669"/>
    <property type="project" value="InterPro"/>
</dbReference>
<dbReference type="CDD" id="cd03260">
    <property type="entry name" value="ABC_PstB_phosphate_transporter"/>
    <property type="match status" value="1"/>
</dbReference>
<dbReference type="FunFam" id="3.40.50.300:FF:000132">
    <property type="entry name" value="Phosphate import ATP-binding protein PstB"/>
    <property type="match status" value="1"/>
</dbReference>
<dbReference type="Gene3D" id="3.40.50.300">
    <property type="entry name" value="P-loop containing nucleotide triphosphate hydrolases"/>
    <property type="match status" value="1"/>
</dbReference>
<dbReference type="InterPro" id="IPR003593">
    <property type="entry name" value="AAA+_ATPase"/>
</dbReference>
<dbReference type="InterPro" id="IPR003439">
    <property type="entry name" value="ABC_transporter-like_ATP-bd"/>
</dbReference>
<dbReference type="InterPro" id="IPR017871">
    <property type="entry name" value="ABC_transporter-like_CS"/>
</dbReference>
<dbReference type="InterPro" id="IPR027417">
    <property type="entry name" value="P-loop_NTPase"/>
</dbReference>
<dbReference type="InterPro" id="IPR005670">
    <property type="entry name" value="PstB-like"/>
</dbReference>
<dbReference type="NCBIfam" id="TIGR00972">
    <property type="entry name" value="3a0107s01c2"/>
    <property type="match status" value="1"/>
</dbReference>
<dbReference type="PANTHER" id="PTHR43423">
    <property type="entry name" value="ABC TRANSPORTER I FAMILY MEMBER 17"/>
    <property type="match status" value="1"/>
</dbReference>
<dbReference type="PANTHER" id="PTHR43423:SF1">
    <property type="entry name" value="ABC TRANSPORTER I FAMILY MEMBER 17"/>
    <property type="match status" value="1"/>
</dbReference>
<dbReference type="Pfam" id="PF00005">
    <property type="entry name" value="ABC_tran"/>
    <property type="match status" value="1"/>
</dbReference>
<dbReference type="SMART" id="SM00382">
    <property type="entry name" value="AAA"/>
    <property type="match status" value="1"/>
</dbReference>
<dbReference type="SUPFAM" id="SSF52540">
    <property type="entry name" value="P-loop containing nucleoside triphosphate hydrolases"/>
    <property type="match status" value="1"/>
</dbReference>
<dbReference type="PROSITE" id="PS00211">
    <property type="entry name" value="ABC_TRANSPORTER_1"/>
    <property type="match status" value="1"/>
</dbReference>
<dbReference type="PROSITE" id="PS50893">
    <property type="entry name" value="ABC_TRANSPORTER_2"/>
    <property type="match status" value="1"/>
</dbReference>
<dbReference type="PROSITE" id="PS51238">
    <property type="entry name" value="PSTB"/>
    <property type="match status" value="1"/>
</dbReference>
<evidence type="ECO:0000255" key="1">
    <source>
        <dbReference type="HAMAP-Rule" id="MF_01702"/>
    </source>
</evidence>
<keyword id="KW-0067">ATP-binding</keyword>
<keyword id="KW-0997">Cell inner membrane</keyword>
<keyword id="KW-1003">Cell membrane</keyword>
<keyword id="KW-0472">Membrane</keyword>
<keyword id="KW-0547">Nucleotide-binding</keyword>
<keyword id="KW-0592">Phosphate transport</keyword>
<keyword id="KW-1185">Reference proteome</keyword>
<keyword id="KW-1278">Translocase</keyword>
<keyword id="KW-0813">Transport</keyword>
<organism>
    <name type="scientific">Shewanella oneidensis (strain ATCC 700550 / JCM 31522 / CIP 106686 / LMG 19005 / NCIMB 14063 / MR-1)</name>
    <dbReference type="NCBI Taxonomy" id="211586"/>
    <lineage>
        <taxon>Bacteria</taxon>
        <taxon>Pseudomonadati</taxon>
        <taxon>Pseudomonadota</taxon>
        <taxon>Gammaproteobacteria</taxon>
        <taxon>Alteromonadales</taxon>
        <taxon>Shewanellaceae</taxon>
        <taxon>Shewanella</taxon>
    </lineage>
</organism>
<name>PSTB2_SHEON</name>
<reference key="1">
    <citation type="journal article" date="2002" name="Nat. Biotechnol.">
        <title>Genome sequence of the dissimilatory metal ion-reducing bacterium Shewanella oneidensis.</title>
        <authorList>
            <person name="Heidelberg J.F."/>
            <person name="Paulsen I.T."/>
            <person name="Nelson K.E."/>
            <person name="Gaidos E.J."/>
            <person name="Nelson W.C."/>
            <person name="Read T.D."/>
            <person name="Eisen J.A."/>
            <person name="Seshadri R."/>
            <person name="Ward N.L."/>
            <person name="Methe B.A."/>
            <person name="Clayton R.A."/>
            <person name="Meyer T."/>
            <person name="Tsapin A."/>
            <person name="Scott J."/>
            <person name="Beanan M.J."/>
            <person name="Brinkac L.M."/>
            <person name="Daugherty S.C."/>
            <person name="DeBoy R.T."/>
            <person name="Dodson R.J."/>
            <person name="Durkin A.S."/>
            <person name="Haft D.H."/>
            <person name="Kolonay J.F."/>
            <person name="Madupu R."/>
            <person name="Peterson J.D."/>
            <person name="Umayam L.A."/>
            <person name="White O."/>
            <person name="Wolf A.M."/>
            <person name="Vamathevan J.J."/>
            <person name="Weidman J.F."/>
            <person name="Impraim M."/>
            <person name="Lee K."/>
            <person name="Berry K.J."/>
            <person name="Lee C."/>
            <person name="Mueller J."/>
            <person name="Khouri H.M."/>
            <person name="Gill J."/>
            <person name="Utterback T.R."/>
            <person name="McDonald L.A."/>
            <person name="Feldblyum T.V."/>
            <person name="Smith H.O."/>
            <person name="Venter J.C."/>
            <person name="Nealson K.H."/>
            <person name="Fraser C.M."/>
        </authorList>
    </citation>
    <scope>NUCLEOTIDE SEQUENCE [LARGE SCALE GENOMIC DNA]</scope>
    <source>
        <strain>ATCC 700550 / JCM 31522 / CIP 106686 / LMG 19005 / NCIMB 14063 / MR-1</strain>
    </source>
</reference>
<protein>
    <recommendedName>
        <fullName evidence="1">Phosphate import ATP-binding protein PstB 2</fullName>
        <ecNumber evidence="1">7.3.2.1</ecNumber>
    </recommendedName>
    <alternativeName>
        <fullName evidence="1">ABC phosphate transporter 2</fullName>
    </alternativeName>
    <alternativeName>
        <fullName evidence="1">Phosphate-transporting ATPase 2</fullName>
    </alternativeName>
</protein>
<sequence>MSKFEVTHLNLFYGENHALKDISIDIPARQVTALIGPSGCGKSSLLRTLNRMNDLVEGVKITGTVTFDGDDIYANIDVKHLRMSVGMVFQKPNPFPMSIYENIAFGLKAQGVKDKAVLDAVVENSLRGAALWEEVKTRLHTPAFGLSGGQQQRLCIARAIAMEPEVILMDEPTSALDPIATHKIEELMDELRKKFTIVIVTHSMNQAKRISDKTAFFWMGELVEHGDTEQIFNNPKDHRTQGYVSGHFG</sequence>
<proteinExistence type="inferred from homology"/>
<accession>Q8E9I8</accession>
<comment type="function">
    <text evidence="1">Part of the ABC transporter complex PstSACB involved in phosphate import. Responsible for energy coupling to the transport system.</text>
</comment>
<comment type="catalytic activity">
    <reaction evidence="1">
        <text>phosphate(out) + ATP + H2O = ADP + 2 phosphate(in) + H(+)</text>
        <dbReference type="Rhea" id="RHEA:24440"/>
        <dbReference type="ChEBI" id="CHEBI:15377"/>
        <dbReference type="ChEBI" id="CHEBI:15378"/>
        <dbReference type="ChEBI" id="CHEBI:30616"/>
        <dbReference type="ChEBI" id="CHEBI:43474"/>
        <dbReference type="ChEBI" id="CHEBI:456216"/>
        <dbReference type="EC" id="7.3.2.1"/>
    </reaction>
</comment>
<comment type="subunit">
    <text evidence="1">The complex is composed of two ATP-binding proteins (PstB), two transmembrane proteins (PstC and PstA) and a solute-binding protein (PstS).</text>
</comment>
<comment type="subcellular location">
    <subcellularLocation>
        <location evidence="1">Cell inner membrane</location>
        <topology evidence="1">Peripheral membrane protein</topology>
    </subcellularLocation>
</comment>
<comment type="similarity">
    <text evidence="1">Belongs to the ABC transporter superfamily. Phosphate importer (TC 3.A.1.7) family.</text>
</comment>
<gene>
    <name evidence="1" type="primary">pstB2</name>
    <name type="synonym">pstB-2</name>
    <name type="ordered locus">SO_4289</name>
</gene>